<keyword id="KW-0963">Cytoplasm</keyword>
<keyword id="KW-0489">Methyltransferase</keyword>
<keyword id="KW-0694">RNA-binding</keyword>
<keyword id="KW-0698">rRNA processing</keyword>
<keyword id="KW-0949">S-adenosyl-L-methionine</keyword>
<keyword id="KW-0808">Transferase</keyword>
<feature type="chain" id="PRO_1000130280" description="Probable ribosomal RNA small subunit methyltransferase A">
    <location>
        <begin position="1"/>
        <end position="282"/>
    </location>
</feature>
<feature type="binding site" evidence="1">
    <location>
        <position position="24"/>
    </location>
    <ligand>
        <name>S-adenosyl-L-methionine</name>
        <dbReference type="ChEBI" id="CHEBI:59789"/>
    </ligand>
</feature>
<feature type="binding site" evidence="1">
    <location>
        <position position="26"/>
    </location>
    <ligand>
        <name>S-adenosyl-L-methionine</name>
        <dbReference type="ChEBI" id="CHEBI:59789"/>
    </ligand>
</feature>
<feature type="binding site" evidence="1">
    <location>
        <position position="51"/>
    </location>
    <ligand>
        <name>S-adenosyl-L-methionine</name>
        <dbReference type="ChEBI" id="CHEBI:59789"/>
    </ligand>
</feature>
<feature type="binding site" evidence="1">
    <location>
        <position position="72"/>
    </location>
    <ligand>
        <name>S-adenosyl-L-methionine</name>
        <dbReference type="ChEBI" id="CHEBI:59789"/>
    </ligand>
</feature>
<feature type="binding site" evidence="1">
    <location>
        <position position="100"/>
    </location>
    <ligand>
        <name>S-adenosyl-L-methionine</name>
        <dbReference type="ChEBI" id="CHEBI:59789"/>
    </ligand>
</feature>
<feature type="binding site" evidence="1">
    <location>
        <position position="115"/>
    </location>
    <ligand>
        <name>S-adenosyl-L-methionine</name>
        <dbReference type="ChEBI" id="CHEBI:59789"/>
    </ligand>
</feature>
<name>RSMA_HALS3</name>
<dbReference type="EC" id="2.1.1.-" evidence="1"/>
<dbReference type="EMBL" id="AM774415">
    <property type="protein sequence ID" value="CAP13821.1"/>
    <property type="molecule type" value="Genomic_DNA"/>
</dbReference>
<dbReference type="RefSeq" id="WP_010902839.1">
    <property type="nucleotide sequence ID" value="NC_010364.1"/>
</dbReference>
<dbReference type="SMR" id="B0R506"/>
<dbReference type="EnsemblBacteria" id="CAP13821">
    <property type="protein sequence ID" value="CAP13821"/>
    <property type="gene ID" value="OE_2674R"/>
</dbReference>
<dbReference type="KEGG" id="hsl:OE_2674R"/>
<dbReference type="HOGENOM" id="CLU_041220_0_2_2"/>
<dbReference type="PhylomeDB" id="B0R506"/>
<dbReference type="Proteomes" id="UP000001321">
    <property type="component" value="Chromosome"/>
</dbReference>
<dbReference type="GO" id="GO:0005737">
    <property type="term" value="C:cytoplasm"/>
    <property type="evidence" value="ECO:0007669"/>
    <property type="project" value="UniProtKB-SubCell"/>
</dbReference>
<dbReference type="GO" id="GO:0003723">
    <property type="term" value="F:RNA binding"/>
    <property type="evidence" value="ECO:0007669"/>
    <property type="project" value="UniProtKB-KW"/>
</dbReference>
<dbReference type="GO" id="GO:0000179">
    <property type="term" value="F:rRNA (adenine-N6,N6-)-dimethyltransferase activity"/>
    <property type="evidence" value="ECO:0007669"/>
    <property type="project" value="InterPro"/>
</dbReference>
<dbReference type="CDD" id="cd02440">
    <property type="entry name" value="AdoMet_MTases"/>
    <property type="match status" value="1"/>
</dbReference>
<dbReference type="Gene3D" id="1.10.8.100">
    <property type="entry name" value="Ribosomal RNA adenine dimethylase-like, domain 2"/>
    <property type="match status" value="1"/>
</dbReference>
<dbReference type="Gene3D" id="3.40.50.150">
    <property type="entry name" value="Vaccinia Virus protein VP39"/>
    <property type="match status" value="1"/>
</dbReference>
<dbReference type="HAMAP" id="MF_00607">
    <property type="entry name" value="16SrRNA_methyltr_A"/>
    <property type="match status" value="1"/>
</dbReference>
<dbReference type="InterPro" id="IPR001737">
    <property type="entry name" value="KsgA/Erm"/>
</dbReference>
<dbReference type="InterPro" id="IPR023165">
    <property type="entry name" value="rRNA_Ade_diMease-like_C"/>
</dbReference>
<dbReference type="InterPro" id="IPR020596">
    <property type="entry name" value="rRNA_Ade_Mease_Trfase_CS"/>
</dbReference>
<dbReference type="InterPro" id="IPR020598">
    <property type="entry name" value="rRNA_Ade_methylase_Trfase_N"/>
</dbReference>
<dbReference type="InterPro" id="IPR011530">
    <property type="entry name" value="rRNA_adenine_dimethylase"/>
</dbReference>
<dbReference type="InterPro" id="IPR029063">
    <property type="entry name" value="SAM-dependent_MTases_sf"/>
</dbReference>
<dbReference type="NCBIfam" id="TIGR00755">
    <property type="entry name" value="ksgA"/>
    <property type="match status" value="1"/>
</dbReference>
<dbReference type="NCBIfam" id="NF011486">
    <property type="entry name" value="PRK14896.1-1"/>
    <property type="match status" value="1"/>
</dbReference>
<dbReference type="PANTHER" id="PTHR11727">
    <property type="entry name" value="DIMETHYLADENOSINE TRANSFERASE"/>
    <property type="match status" value="1"/>
</dbReference>
<dbReference type="PANTHER" id="PTHR11727:SF7">
    <property type="entry name" value="DIMETHYLADENOSINE TRANSFERASE-RELATED"/>
    <property type="match status" value="1"/>
</dbReference>
<dbReference type="Pfam" id="PF00398">
    <property type="entry name" value="RrnaAD"/>
    <property type="match status" value="1"/>
</dbReference>
<dbReference type="SMART" id="SM00650">
    <property type="entry name" value="rADc"/>
    <property type="match status" value="1"/>
</dbReference>
<dbReference type="SUPFAM" id="SSF53335">
    <property type="entry name" value="S-adenosyl-L-methionine-dependent methyltransferases"/>
    <property type="match status" value="1"/>
</dbReference>
<dbReference type="PROSITE" id="PS01131">
    <property type="entry name" value="RRNA_A_DIMETH"/>
    <property type="match status" value="1"/>
</dbReference>
<dbReference type="PROSITE" id="PS51689">
    <property type="entry name" value="SAM_RNA_A_N6_MT"/>
    <property type="match status" value="1"/>
</dbReference>
<comment type="function">
    <text evidence="1">Specifically dimethylates two adjacent adenosines in the loop of a conserved hairpin near the 3'-end of 16S rRNA in the 30S particle. May play a critical role in biogenesis of 30S subunits.</text>
</comment>
<comment type="subcellular location">
    <subcellularLocation>
        <location evidence="1">Cytoplasm</location>
    </subcellularLocation>
</comment>
<comment type="similarity">
    <text evidence="1">Belongs to the class I-like SAM-binding methyltransferase superfamily. rRNA adenine N(6)-methyltransferase family. RsmA subfamily.</text>
</comment>
<reference key="1">
    <citation type="journal article" date="2008" name="Genomics">
        <title>Evolution in the laboratory: the genome of Halobacterium salinarum strain R1 compared to that of strain NRC-1.</title>
        <authorList>
            <person name="Pfeiffer F."/>
            <person name="Schuster S.C."/>
            <person name="Broicher A."/>
            <person name="Falb M."/>
            <person name="Palm P."/>
            <person name="Rodewald K."/>
            <person name="Ruepp A."/>
            <person name="Soppa J."/>
            <person name="Tittor J."/>
            <person name="Oesterhelt D."/>
        </authorList>
    </citation>
    <scope>NUCLEOTIDE SEQUENCE [LARGE SCALE GENOMIC DNA]</scope>
    <source>
        <strain>ATCC 29341 / DSM 671 / R1</strain>
    </source>
</reference>
<evidence type="ECO:0000255" key="1">
    <source>
        <dbReference type="HAMAP-Rule" id="MF_00607"/>
    </source>
</evidence>
<protein>
    <recommendedName>
        <fullName evidence="1">Probable ribosomal RNA small subunit methyltransferase A</fullName>
        <ecNumber evidence="1">2.1.1.-</ecNumber>
    </recommendedName>
    <alternativeName>
        <fullName evidence="1">16S rRNA dimethyladenosine transferase</fullName>
    </alternativeName>
    <alternativeName>
        <fullName evidence="1">16S rRNA dimethylase</fullName>
    </alternativeName>
    <alternativeName>
        <fullName evidence="1">S-adenosylmethionine-6-N',N'-adenosyl(rRNA) dimethyltransferase</fullName>
    </alternativeName>
</protein>
<proteinExistence type="inferred from homology"/>
<organism>
    <name type="scientific">Halobacterium salinarum (strain ATCC 29341 / DSM 671 / R1)</name>
    <dbReference type="NCBI Taxonomy" id="478009"/>
    <lineage>
        <taxon>Archaea</taxon>
        <taxon>Methanobacteriati</taxon>
        <taxon>Methanobacteriota</taxon>
        <taxon>Stenosarchaea group</taxon>
        <taxon>Halobacteria</taxon>
        <taxon>Halobacteriales</taxon>
        <taxon>Halobacteriaceae</taxon>
        <taxon>Halobacterium</taxon>
        <taxon>Halobacterium salinarum NRC-34001</taxon>
    </lineage>
</organism>
<gene>
    <name evidence="1" type="primary">rsmA</name>
    <name evidence="1" type="synonym">ksgA</name>
    <name type="ordered locus">OE_2674R</name>
</gene>
<sequence>MTAPRDPDALIRRAGRPNPDFDQHFLIDDRVLDRIPTYADGFDRGHVLEIGAGTGALTDRLLSVADRVTAVERDESYASFLREEFADAIAAGDLDVVAGDALAVDLPAFTCAVSNLPYGVASEVTFRLLPAGKPMVLMYQLEFAERMAADPGTSEYGRLSVATQHYADVSIVETVPAAAFDPQPRVESAVVRVTPRDPDYVVADEAFFLSFVKALFTQRRKTTRNAIRNTAHISGLDDPDAVVAAVDDDVLGTRPGSLSPATFAALANVAWGVETAPGPDPQ</sequence>
<accession>B0R506</accession>